<organism>
    <name type="scientific">Penicillium thymicola</name>
    <dbReference type="NCBI Taxonomy" id="293382"/>
    <lineage>
        <taxon>Eukaryota</taxon>
        <taxon>Fungi</taxon>
        <taxon>Dikarya</taxon>
        <taxon>Ascomycota</taxon>
        <taxon>Pezizomycotina</taxon>
        <taxon>Eurotiomycetes</taxon>
        <taxon>Eurotiomycetidae</taxon>
        <taxon>Eurotiales</taxon>
        <taxon>Aspergillaceae</taxon>
        <taxon>Penicillium</taxon>
    </lineage>
</organism>
<dbReference type="EC" id="2.5.1.-" evidence="6"/>
<dbReference type="EMBL" id="KX528209">
    <property type="protein sequence ID" value="ANY57885.1"/>
    <property type="molecule type" value="Genomic_DNA"/>
</dbReference>
<dbReference type="SMR" id="A0A1B2CTB2"/>
<dbReference type="BioCyc" id="MetaCyc:MONOMER-124188"/>
<dbReference type="GO" id="GO:0016765">
    <property type="term" value="F:transferase activity, transferring alkyl or aryl (other than methyl) groups"/>
    <property type="evidence" value="ECO:0007669"/>
    <property type="project" value="InterPro"/>
</dbReference>
<dbReference type="GO" id="GO:0009820">
    <property type="term" value="P:alkaloid metabolic process"/>
    <property type="evidence" value="ECO:0007669"/>
    <property type="project" value="InterPro"/>
</dbReference>
<dbReference type="CDD" id="cd13929">
    <property type="entry name" value="PT-DMATS_CymD"/>
    <property type="match status" value="1"/>
</dbReference>
<dbReference type="InterPro" id="IPR033964">
    <property type="entry name" value="Aro_prenylTrfase"/>
</dbReference>
<dbReference type="InterPro" id="IPR017795">
    <property type="entry name" value="Aro_prenylTrfase_DMATS"/>
</dbReference>
<dbReference type="InterPro" id="IPR012148">
    <property type="entry name" value="DMATS-type_fun"/>
</dbReference>
<dbReference type="NCBIfam" id="TIGR03429">
    <property type="entry name" value="arom_pren_DMATS"/>
    <property type="match status" value="1"/>
</dbReference>
<dbReference type="PANTHER" id="PTHR40627">
    <property type="entry name" value="INDOLE PRENYLTRANSFERASE TDIB-RELATED"/>
    <property type="match status" value="1"/>
</dbReference>
<dbReference type="PANTHER" id="PTHR40627:SF3">
    <property type="entry name" value="PRENYLTRANSFERASE ASQH2-RELATED"/>
    <property type="match status" value="1"/>
</dbReference>
<dbReference type="Pfam" id="PF11991">
    <property type="entry name" value="Trp_DMAT"/>
    <property type="match status" value="1"/>
</dbReference>
<dbReference type="PIRSF" id="PIRSF000509">
    <property type="entry name" value="Trp_DMAT"/>
    <property type="match status" value="1"/>
</dbReference>
<dbReference type="SFLD" id="SFLDS00036">
    <property type="entry name" value="Aromatic_Prenyltransferase"/>
    <property type="match status" value="1"/>
</dbReference>
<dbReference type="SFLD" id="SFLDG01162">
    <property type="entry name" value="I"/>
    <property type="match status" value="1"/>
</dbReference>
<evidence type="ECO:0000250" key="1">
    <source>
        <dbReference type="UniProtKB" id="C8VJQ3"/>
    </source>
</evidence>
<evidence type="ECO:0000250" key="2">
    <source>
        <dbReference type="UniProtKB" id="Q50EL0"/>
    </source>
</evidence>
<evidence type="ECO:0000250" key="3">
    <source>
        <dbReference type="UniProtKB" id="Q5AR53"/>
    </source>
</evidence>
<evidence type="ECO:0000250" key="4">
    <source>
        <dbReference type="UniProtKB" id="Q5AR54"/>
    </source>
</evidence>
<evidence type="ECO:0000256" key="5">
    <source>
        <dbReference type="SAM" id="MobiDB-lite"/>
    </source>
</evidence>
<evidence type="ECO:0000269" key="6">
    <source>
    </source>
</evidence>
<evidence type="ECO:0000269" key="7">
    <source>
    </source>
</evidence>
<evidence type="ECO:0000303" key="8">
    <source>
    </source>
</evidence>
<evidence type="ECO:0000305" key="9"/>
<evidence type="ECO:0000305" key="10">
    <source>
    </source>
</evidence>
<feature type="chain" id="PRO_0000455361" description="Prenyltransferase penG">
    <location>
        <begin position="1"/>
        <end position="434"/>
    </location>
</feature>
<feature type="region of interest" description="Disordered" evidence="5">
    <location>
        <begin position="1"/>
        <end position="35"/>
    </location>
</feature>
<feature type="compositionally biased region" description="Polar residues" evidence="5">
    <location>
        <begin position="1"/>
        <end position="14"/>
    </location>
</feature>
<feature type="compositionally biased region" description="Polar residues" evidence="5">
    <location>
        <begin position="21"/>
        <end position="35"/>
    </location>
</feature>
<feature type="binding site" evidence="2">
    <location>
        <begin position="104"/>
        <end position="105"/>
    </location>
    <ligand>
        <name>L-tryptophan</name>
        <dbReference type="ChEBI" id="CHEBI:57912"/>
    </ligand>
</feature>
<feature type="binding site" evidence="2">
    <location>
        <position position="108"/>
    </location>
    <ligand>
        <name>L-tryptophan</name>
        <dbReference type="ChEBI" id="CHEBI:57912"/>
    </ligand>
</feature>
<feature type="binding site" evidence="2">
    <location>
        <position position="122"/>
    </location>
    <ligand>
        <name>substrate</name>
    </ligand>
</feature>
<feature type="binding site" evidence="2">
    <location>
        <position position="208"/>
    </location>
    <ligand>
        <name>substrate</name>
    </ligand>
</feature>
<feature type="binding site" evidence="2">
    <location>
        <position position="275"/>
    </location>
    <ligand>
        <name>substrate</name>
    </ligand>
</feature>
<feature type="binding site" evidence="2">
    <location>
        <position position="277"/>
    </location>
    <ligand>
        <name>substrate</name>
    </ligand>
</feature>
<feature type="binding site" evidence="2">
    <location>
        <position position="279"/>
    </location>
    <ligand>
        <name>substrate</name>
    </ligand>
</feature>
<feature type="binding site" evidence="2">
    <location>
        <position position="348"/>
    </location>
    <ligand>
        <name>substrate</name>
    </ligand>
</feature>
<reference key="1">
    <citation type="journal article" date="2015" name="J. Am. Chem. Soc.">
        <title>Tandem prenyltransferases catalyze isoprenoid elongation and complexity generation in biosynthesis of quinolone alkaloids.</title>
        <authorList>
            <person name="Zou Y."/>
            <person name="Zhan Z."/>
            <person name="Li D."/>
            <person name="Tang M."/>
            <person name="Cacho R.A."/>
            <person name="Watanabe K."/>
            <person name="Tang Y."/>
        </authorList>
    </citation>
    <scope>NUCLEOTIDE SEQUENCE [GENOMIC DNA]</scope>
    <scope>FUNCTION</scope>
    <scope>CATALYTIC ACTIVITY</scope>
    <scope>PATHWAY</scope>
    <source>
        <strain>IBT 5891 / CBS 111225</strain>
    </source>
</reference>
<reference key="2">
    <citation type="journal article" date="2017" name="Nat. Chem. Biol.">
        <title>Enzyme-catalyzed cationic epoxide rearrangements in quinolone alkaloid biosynthesis.</title>
        <authorList>
            <person name="Zou Y."/>
            <person name="Garcia-Borras M."/>
            <person name="Tang M.C."/>
            <person name="Hirayama Y."/>
            <person name="Li D.H."/>
            <person name="Li L."/>
            <person name="Watanabe K."/>
            <person name="Houk K.N."/>
            <person name="Tang Y."/>
        </authorList>
    </citation>
    <scope>FUNCTION</scope>
</reference>
<keyword id="KW-0808">Transferase</keyword>
<comment type="function">
    <text evidence="1 3 4 6 7 10">Prenyltransferase; part of the gene cluster that mediates the biosynthesis of penigequinolones, potent insecticidal alkaloids that contain a highly modified 10-carbon prenyl group (PubMed:25859931). The first stage is catalyzed by the nonribosomal peptide synthetase penN that condenses anthranilic acid and O-methyl-L-tyrosine to produce 4'-methoxycyclopeptin (By similarity). 4'-methoxycyclopeptin is then converted to 4'-methoxydehydrocyclopeptin by the ketoglutarate-dependent dioxygenase penM through dehydrogenation to form a double bond between C-alpha and C-beta of the O-methyltyrosine side chain (By similarity). PenM also converts its first product methoxydehydrocyclopeptin to 4'-methoxycyclopenin (By similarity). The following conversion of 4'methoxycyclopenin into 4'-methoxyviridicatin is catalyzed by the cyclopenase penL (By similarity). 4'-methoxyviridicatin is the precursor of quinolone natural products, and is further converted to quinolinone B (Probable). The prenyltransferase penI then catalyzes the canonical Friedel-Crafts alkylation of quinolinone B with dimethylallyl cation to yield dimethylallyl quinolone, which is subjected to FAD-dependent dehydrogenation by the FAD-linked oxidoreductase penH to yield conjugated aryl diene (PubMed:25859931). The delta(3') double bond then serves as the site of the second alkylation with DMAPP catalyzed by the prenyltransferase penG to yield a carbenium ion intermediate, which can be attacked by H(2)O to yield a styrenyl quinolone containing a C3'-hydroxyprenyl chain, or undergo cyclization to yield yaequinolones J1 and J2 (PubMed:25859931). The conversion of the styrenyl quinolone into the tetrahydrofuran-containing yaequinolone C is performed by the FAD-dependent monooxygenase penE and involves epoxidation of the terminal C7'-C8' olefin, followed by epoxide ring opening initiated by the C3' hydroxyl group (PubMed:25859931). The predicted cysteine hydrolase penJ acts as an epoxide hydrolase that enhances the rate of the 5-exo-tet cyclization step, increasing the yield of yaequinolone C (PubMed:25859931, PubMed:28114276). PenF catalyzes the cationic rearrangement of the epoxide formed by penE (before ring opening to produce yaequinolone C) into yaequinolone D (PubMed:28114276). Finally, the short-chain dehydrogenase/reductase (SDR)-like reductase penD, catalyzes both the dehydration of yaequinolone D and the reduction of the resulting oxonium to yield penigequinolone (PubMed:28114276).</text>
</comment>
<comment type="catalytic activity">
    <reaction evidence="6">
        <text>yaequinolone E + dimethylallyl diphosphate + H2O = [(1'E)-3'-hydroxy-3',7'-dimethylocta-1',6'-dien-1'-yl]-quinolinone B + diphosphate</text>
        <dbReference type="Rhea" id="RHEA:74007"/>
        <dbReference type="ChEBI" id="CHEBI:15377"/>
        <dbReference type="ChEBI" id="CHEBI:33019"/>
        <dbReference type="ChEBI" id="CHEBI:57623"/>
        <dbReference type="ChEBI" id="CHEBI:193077"/>
        <dbReference type="ChEBI" id="CHEBI:193078"/>
    </reaction>
    <physiologicalReaction direction="left-to-right" evidence="6">
        <dbReference type="Rhea" id="RHEA:74008"/>
    </physiologicalReaction>
</comment>
<comment type="pathway">
    <text evidence="6">Secondary metabolite biosynthesis.</text>
</comment>
<comment type="pathway">
    <text evidence="6">Alkaloid biosynthesis.</text>
</comment>
<comment type="pathway">
    <text evidence="6">Mycotoxin biosynthesis.</text>
</comment>
<comment type="similarity">
    <text evidence="9">Belongs to the tryptophan dimethylallyltransferase family.</text>
</comment>
<accession>A0A1B2CTB2</accession>
<protein>
    <recommendedName>
        <fullName evidence="8">Prenyltransferase penG</fullName>
        <ecNumber evidence="6">2.5.1.-</ecNumber>
    </recommendedName>
    <alternativeName>
        <fullName evidence="8">Penigequinolones biosynthesis cluster protein G</fullName>
    </alternativeName>
</protein>
<sequence length="434" mass="49615">MTQDVVTVSSQTAGTIKESGTHSNPDNKTTSPSTWKSLSKYACFDSEAERQWWNDSGALIARFLDIAKGDIHEQYQYLLFVREVVIPALGPYPPIRRCCINITEIGIELSLNYQGPGKPVFRVSLDPISEMSGTPMDPLNIDTVNDTVARLASIGLKDFDRTLHYHFMSEFCMPEEKAKTYQQDSREPMAWSQMILGFDFKDGNVVTKEYIWTRHAAHASGLHPHAIIRRAISRVDDQMRCSAAVNLVLEYMETFNADIPVPFFSWDLIDPSESRLKLYGIAWQWSWAKVEEVCTLGGKLQGPATDRSIGLLRKLWGILKLDEFTPSMAFTWNYEILPGQTHPNVRIYFAICDRSDEEVAQAVSQWFNLLGWHETARSYPETLRYLQPNRDLKKTNTAHTWLSITVTEKGVYTSLYYHPLGNGPDDHNIRKTWF</sequence>
<gene>
    <name evidence="8" type="primary">penG</name>
</gene>
<proteinExistence type="evidence at protein level"/>
<name>PENG_PENTH</name>